<organism>
    <name type="scientific">Moorella thermoacetica (strain ATCC 39073 / JCM 9320)</name>
    <dbReference type="NCBI Taxonomy" id="264732"/>
    <lineage>
        <taxon>Bacteria</taxon>
        <taxon>Bacillati</taxon>
        <taxon>Bacillota</taxon>
        <taxon>Clostridia</taxon>
        <taxon>Moorellales</taxon>
        <taxon>Moorellaceae</taxon>
        <taxon>Moorella</taxon>
    </lineage>
</organism>
<gene>
    <name evidence="1" type="primary">rpoA</name>
    <name type="ordered locus">Moth_2431</name>
</gene>
<accession>Q2RFS6</accession>
<feature type="chain" id="PRO_0000264516" description="DNA-directed RNA polymerase subunit alpha">
    <location>
        <begin position="1"/>
        <end position="313"/>
    </location>
</feature>
<feature type="region of interest" description="Alpha N-terminal domain (alpha-NTD)" evidence="1">
    <location>
        <begin position="1"/>
        <end position="226"/>
    </location>
</feature>
<feature type="region of interest" description="Alpha C-terminal domain (alpha-CTD)" evidence="1">
    <location>
        <begin position="242"/>
        <end position="313"/>
    </location>
</feature>
<protein>
    <recommendedName>
        <fullName evidence="1">DNA-directed RNA polymerase subunit alpha</fullName>
        <shortName evidence="1">RNAP subunit alpha</shortName>
        <ecNumber evidence="1">2.7.7.6</ecNumber>
    </recommendedName>
    <alternativeName>
        <fullName evidence="1">RNA polymerase subunit alpha</fullName>
    </alternativeName>
    <alternativeName>
        <fullName evidence="1">Transcriptase subunit alpha</fullName>
    </alternativeName>
</protein>
<reference key="1">
    <citation type="journal article" date="2008" name="Environ. Microbiol.">
        <title>The complete genome sequence of Moorella thermoacetica (f. Clostridium thermoaceticum).</title>
        <authorList>
            <person name="Pierce E."/>
            <person name="Xie G."/>
            <person name="Barabote R.D."/>
            <person name="Saunders E."/>
            <person name="Han C.S."/>
            <person name="Detter J.C."/>
            <person name="Richardson P."/>
            <person name="Brettin T.S."/>
            <person name="Das A."/>
            <person name="Ljungdahl L.G."/>
            <person name="Ragsdale S.W."/>
        </authorList>
    </citation>
    <scope>NUCLEOTIDE SEQUENCE [LARGE SCALE GENOMIC DNA]</scope>
    <source>
        <strain>ATCC 39073 / JCM 9320</strain>
    </source>
</reference>
<keyword id="KW-0240">DNA-directed RNA polymerase</keyword>
<keyword id="KW-0548">Nucleotidyltransferase</keyword>
<keyword id="KW-0804">Transcription</keyword>
<keyword id="KW-0808">Transferase</keyword>
<proteinExistence type="inferred from homology"/>
<comment type="function">
    <text evidence="1">DNA-dependent RNA polymerase catalyzes the transcription of DNA into RNA using the four ribonucleoside triphosphates as substrates.</text>
</comment>
<comment type="catalytic activity">
    <reaction evidence="1">
        <text>RNA(n) + a ribonucleoside 5'-triphosphate = RNA(n+1) + diphosphate</text>
        <dbReference type="Rhea" id="RHEA:21248"/>
        <dbReference type="Rhea" id="RHEA-COMP:14527"/>
        <dbReference type="Rhea" id="RHEA-COMP:17342"/>
        <dbReference type="ChEBI" id="CHEBI:33019"/>
        <dbReference type="ChEBI" id="CHEBI:61557"/>
        <dbReference type="ChEBI" id="CHEBI:140395"/>
        <dbReference type="EC" id="2.7.7.6"/>
    </reaction>
</comment>
<comment type="subunit">
    <text evidence="1">Homodimer. The RNAP catalytic core consists of 2 alpha, 1 beta, 1 beta' and 1 omega subunit. When a sigma factor is associated with the core the holoenzyme is formed, which can initiate transcription.</text>
</comment>
<comment type="domain">
    <text evidence="1">The N-terminal domain is essential for RNAP assembly and basal transcription, whereas the C-terminal domain is involved in interaction with transcriptional regulators and with upstream promoter elements.</text>
</comment>
<comment type="similarity">
    <text evidence="1">Belongs to the RNA polymerase alpha chain family.</text>
</comment>
<sequence length="313" mass="34931">MLEIEKPKIECQHLDDKYGRFVVEPLERGYGITLGNSLRRMLLSSLPGAAVTSVKIEGVLHEFSTIPGVVEDTTDIILNIKSLALKLHSDEPRVIRIEADDEGVVTAGDIITGADVEILNPEQVIATVEKGGRLYMEMTVEKGRGYVSADKNKKEDQPIGIIPVDSLFSPIHKVNYTVENTRVGQITDYDKLTLEVWTDGSIAPDEAVSSAAKILIEHMRLFLGLTERVSDEVTMVEKEEETRDRLMDMSIEELDLSVRSYNCLKRAGINTVAELLQRSEEDMMKVRNLGKKSLEEVTQKLSELGLSLRSSEE</sequence>
<evidence type="ECO:0000255" key="1">
    <source>
        <dbReference type="HAMAP-Rule" id="MF_00059"/>
    </source>
</evidence>
<name>RPOA_MOOTA</name>
<dbReference type="EC" id="2.7.7.6" evidence="1"/>
<dbReference type="EMBL" id="CP000232">
    <property type="protein sequence ID" value="ABC20713.1"/>
    <property type="molecule type" value="Genomic_DNA"/>
</dbReference>
<dbReference type="RefSeq" id="YP_431256.1">
    <property type="nucleotide sequence ID" value="NC_007644.1"/>
</dbReference>
<dbReference type="SMR" id="Q2RFS6"/>
<dbReference type="STRING" id="264732.Moth_2431"/>
<dbReference type="EnsemblBacteria" id="ABC20713">
    <property type="protein sequence ID" value="ABC20713"/>
    <property type="gene ID" value="Moth_2431"/>
</dbReference>
<dbReference type="KEGG" id="mta:Moth_2431"/>
<dbReference type="PATRIC" id="fig|264732.11.peg.2649"/>
<dbReference type="eggNOG" id="COG0202">
    <property type="taxonomic scope" value="Bacteria"/>
</dbReference>
<dbReference type="HOGENOM" id="CLU_053084_0_1_9"/>
<dbReference type="OrthoDB" id="9805706at2"/>
<dbReference type="GO" id="GO:0005737">
    <property type="term" value="C:cytoplasm"/>
    <property type="evidence" value="ECO:0007669"/>
    <property type="project" value="UniProtKB-ARBA"/>
</dbReference>
<dbReference type="GO" id="GO:0000428">
    <property type="term" value="C:DNA-directed RNA polymerase complex"/>
    <property type="evidence" value="ECO:0007669"/>
    <property type="project" value="UniProtKB-KW"/>
</dbReference>
<dbReference type="GO" id="GO:0003677">
    <property type="term" value="F:DNA binding"/>
    <property type="evidence" value="ECO:0007669"/>
    <property type="project" value="UniProtKB-UniRule"/>
</dbReference>
<dbReference type="GO" id="GO:0003899">
    <property type="term" value="F:DNA-directed RNA polymerase activity"/>
    <property type="evidence" value="ECO:0007669"/>
    <property type="project" value="UniProtKB-UniRule"/>
</dbReference>
<dbReference type="GO" id="GO:0046983">
    <property type="term" value="F:protein dimerization activity"/>
    <property type="evidence" value="ECO:0007669"/>
    <property type="project" value="InterPro"/>
</dbReference>
<dbReference type="GO" id="GO:0006351">
    <property type="term" value="P:DNA-templated transcription"/>
    <property type="evidence" value="ECO:0007669"/>
    <property type="project" value="UniProtKB-UniRule"/>
</dbReference>
<dbReference type="CDD" id="cd06928">
    <property type="entry name" value="RNAP_alpha_NTD"/>
    <property type="match status" value="1"/>
</dbReference>
<dbReference type="FunFam" id="1.10.150.20:FF:000001">
    <property type="entry name" value="DNA-directed RNA polymerase subunit alpha"/>
    <property type="match status" value="1"/>
</dbReference>
<dbReference type="FunFam" id="2.170.120.12:FF:000001">
    <property type="entry name" value="DNA-directed RNA polymerase subunit alpha"/>
    <property type="match status" value="1"/>
</dbReference>
<dbReference type="Gene3D" id="1.10.150.20">
    <property type="entry name" value="5' to 3' exonuclease, C-terminal subdomain"/>
    <property type="match status" value="1"/>
</dbReference>
<dbReference type="Gene3D" id="2.170.120.12">
    <property type="entry name" value="DNA-directed RNA polymerase, insert domain"/>
    <property type="match status" value="1"/>
</dbReference>
<dbReference type="Gene3D" id="3.30.1360.10">
    <property type="entry name" value="RNA polymerase, RBP11-like subunit"/>
    <property type="match status" value="1"/>
</dbReference>
<dbReference type="HAMAP" id="MF_00059">
    <property type="entry name" value="RNApol_bact_RpoA"/>
    <property type="match status" value="1"/>
</dbReference>
<dbReference type="InterPro" id="IPR011262">
    <property type="entry name" value="DNA-dir_RNA_pol_insert"/>
</dbReference>
<dbReference type="InterPro" id="IPR011263">
    <property type="entry name" value="DNA-dir_RNA_pol_RpoA/D/Rpb3"/>
</dbReference>
<dbReference type="InterPro" id="IPR011773">
    <property type="entry name" value="DNA-dir_RpoA"/>
</dbReference>
<dbReference type="InterPro" id="IPR036603">
    <property type="entry name" value="RBP11-like"/>
</dbReference>
<dbReference type="InterPro" id="IPR011260">
    <property type="entry name" value="RNAP_asu_C"/>
</dbReference>
<dbReference type="InterPro" id="IPR036643">
    <property type="entry name" value="RNApol_insert_sf"/>
</dbReference>
<dbReference type="NCBIfam" id="NF003513">
    <property type="entry name" value="PRK05182.1-2"/>
    <property type="match status" value="1"/>
</dbReference>
<dbReference type="NCBIfam" id="NF003515">
    <property type="entry name" value="PRK05182.2-1"/>
    <property type="match status" value="1"/>
</dbReference>
<dbReference type="NCBIfam" id="NF003516">
    <property type="entry name" value="PRK05182.2-2"/>
    <property type="match status" value="1"/>
</dbReference>
<dbReference type="NCBIfam" id="NF003519">
    <property type="entry name" value="PRK05182.2-5"/>
    <property type="match status" value="1"/>
</dbReference>
<dbReference type="NCBIfam" id="TIGR02027">
    <property type="entry name" value="rpoA"/>
    <property type="match status" value="1"/>
</dbReference>
<dbReference type="Pfam" id="PF01000">
    <property type="entry name" value="RNA_pol_A_bac"/>
    <property type="match status" value="1"/>
</dbReference>
<dbReference type="Pfam" id="PF03118">
    <property type="entry name" value="RNA_pol_A_CTD"/>
    <property type="match status" value="1"/>
</dbReference>
<dbReference type="Pfam" id="PF01193">
    <property type="entry name" value="RNA_pol_L"/>
    <property type="match status" value="1"/>
</dbReference>
<dbReference type="SMART" id="SM00662">
    <property type="entry name" value="RPOLD"/>
    <property type="match status" value="1"/>
</dbReference>
<dbReference type="SUPFAM" id="SSF47789">
    <property type="entry name" value="C-terminal domain of RNA polymerase alpha subunit"/>
    <property type="match status" value="1"/>
</dbReference>
<dbReference type="SUPFAM" id="SSF56553">
    <property type="entry name" value="Insert subdomain of RNA polymerase alpha subunit"/>
    <property type="match status" value="1"/>
</dbReference>
<dbReference type="SUPFAM" id="SSF55257">
    <property type="entry name" value="RBP11-like subunits of RNA polymerase"/>
    <property type="match status" value="1"/>
</dbReference>